<evidence type="ECO:0000255" key="1">
    <source>
        <dbReference type="HAMAP-Rule" id="MF_01454"/>
    </source>
</evidence>
<evidence type="ECO:0000255" key="2">
    <source>
        <dbReference type="PROSITE-ProRule" id="PRU01231"/>
    </source>
</evidence>
<evidence type="ECO:0000256" key="3">
    <source>
        <dbReference type="SAM" id="MobiDB-lite"/>
    </source>
</evidence>
<sequence length="389" mass="42973">MKFVDEAKILIVAGDGGNGCVSFRREKYIPKGGPDGGDGGDGGDVYMVADENLNTLIDYRFTKSYRAERGENGQSRDCTGKRGQDITINVPVGTRARDLATGEIIADLTVHGQKQMVAKGGFHGLGNTRFKSSVNRAPRQRTMGTPGESREVLLELMLLADVGMLGMPNAGKSTFIRAVSAAKPKVADYPFTTLVPSLGVVRMDSHQSFVVADIPGLIEGAADGAGLGIQFLKHLERCRVLLHLIDIDPIDGSDPVENAKIIISELEKYSDKLAQKPRWLVFNKVDLLDADEAKQKAQAIVEALGWEGDYYMIAAINQEGVKKLCWDIMEFLKVTPREQDIATALAAEEKVDFMWDDYHKEQLENPDLEDDDEDWDEEDDDGVEFIYQR</sequence>
<accession>B4F2A8</accession>
<proteinExistence type="inferred from homology"/>
<name>OBG_PROMH</name>
<comment type="function">
    <text evidence="1">An essential GTPase which binds GTP, GDP and possibly (p)ppGpp with moderate affinity, with high nucleotide exchange rates and a fairly low GTP hydrolysis rate. Plays a role in control of the cell cycle, stress response, ribosome biogenesis and in those bacteria that undergo differentiation, in morphogenesis control.</text>
</comment>
<comment type="cofactor">
    <cofactor evidence="1">
        <name>Mg(2+)</name>
        <dbReference type="ChEBI" id="CHEBI:18420"/>
    </cofactor>
</comment>
<comment type="subunit">
    <text evidence="1">Monomer.</text>
</comment>
<comment type="subcellular location">
    <subcellularLocation>
        <location evidence="1">Cytoplasm</location>
    </subcellularLocation>
</comment>
<comment type="similarity">
    <text evidence="1">Belongs to the TRAFAC class OBG-HflX-like GTPase superfamily. OBG GTPase family.</text>
</comment>
<feature type="chain" id="PRO_0000386146" description="GTPase Obg">
    <location>
        <begin position="1"/>
        <end position="389"/>
    </location>
</feature>
<feature type="domain" description="Obg" evidence="2">
    <location>
        <begin position="1"/>
        <end position="159"/>
    </location>
</feature>
<feature type="domain" description="OBG-type G" evidence="1">
    <location>
        <begin position="160"/>
        <end position="333"/>
    </location>
</feature>
<feature type="region of interest" description="Disordered" evidence="3">
    <location>
        <begin position="362"/>
        <end position="389"/>
    </location>
</feature>
<feature type="compositionally biased region" description="Acidic residues" evidence="3">
    <location>
        <begin position="364"/>
        <end position="383"/>
    </location>
</feature>
<feature type="binding site" evidence="1">
    <location>
        <begin position="166"/>
        <end position="173"/>
    </location>
    <ligand>
        <name>GTP</name>
        <dbReference type="ChEBI" id="CHEBI:37565"/>
    </ligand>
</feature>
<feature type="binding site" evidence="1">
    <location>
        <position position="173"/>
    </location>
    <ligand>
        <name>Mg(2+)</name>
        <dbReference type="ChEBI" id="CHEBI:18420"/>
    </ligand>
</feature>
<feature type="binding site" evidence="1">
    <location>
        <begin position="191"/>
        <end position="195"/>
    </location>
    <ligand>
        <name>GTP</name>
        <dbReference type="ChEBI" id="CHEBI:37565"/>
    </ligand>
</feature>
<feature type="binding site" evidence="1">
    <location>
        <position position="193"/>
    </location>
    <ligand>
        <name>Mg(2+)</name>
        <dbReference type="ChEBI" id="CHEBI:18420"/>
    </ligand>
</feature>
<feature type="binding site" evidence="1">
    <location>
        <begin position="213"/>
        <end position="216"/>
    </location>
    <ligand>
        <name>GTP</name>
        <dbReference type="ChEBI" id="CHEBI:37565"/>
    </ligand>
</feature>
<feature type="binding site" evidence="1">
    <location>
        <begin position="283"/>
        <end position="286"/>
    </location>
    <ligand>
        <name>GTP</name>
        <dbReference type="ChEBI" id="CHEBI:37565"/>
    </ligand>
</feature>
<feature type="binding site" evidence="1">
    <location>
        <begin position="314"/>
        <end position="316"/>
    </location>
    <ligand>
        <name>GTP</name>
        <dbReference type="ChEBI" id="CHEBI:37565"/>
    </ligand>
</feature>
<dbReference type="EC" id="3.6.5.-" evidence="1"/>
<dbReference type="EMBL" id="AM942759">
    <property type="protein sequence ID" value="CAR46676.1"/>
    <property type="molecule type" value="Genomic_DNA"/>
</dbReference>
<dbReference type="SMR" id="B4F2A8"/>
<dbReference type="EnsemblBacteria" id="CAR46676">
    <property type="protein sequence ID" value="CAR46676"/>
    <property type="gene ID" value="PMI3407"/>
</dbReference>
<dbReference type="GeneID" id="6802608"/>
<dbReference type="KEGG" id="pmr:PMI3407"/>
<dbReference type="eggNOG" id="COG0536">
    <property type="taxonomic scope" value="Bacteria"/>
</dbReference>
<dbReference type="HOGENOM" id="CLU_011747_2_0_6"/>
<dbReference type="Proteomes" id="UP000008319">
    <property type="component" value="Chromosome"/>
</dbReference>
<dbReference type="GO" id="GO:0005737">
    <property type="term" value="C:cytoplasm"/>
    <property type="evidence" value="ECO:0007669"/>
    <property type="project" value="UniProtKB-SubCell"/>
</dbReference>
<dbReference type="GO" id="GO:0005525">
    <property type="term" value="F:GTP binding"/>
    <property type="evidence" value="ECO:0007669"/>
    <property type="project" value="UniProtKB-UniRule"/>
</dbReference>
<dbReference type="GO" id="GO:0003924">
    <property type="term" value="F:GTPase activity"/>
    <property type="evidence" value="ECO:0007669"/>
    <property type="project" value="UniProtKB-UniRule"/>
</dbReference>
<dbReference type="GO" id="GO:0000287">
    <property type="term" value="F:magnesium ion binding"/>
    <property type="evidence" value="ECO:0007669"/>
    <property type="project" value="InterPro"/>
</dbReference>
<dbReference type="GO" id="GO:0042254">
    <property type="term" value="P:ribosome biogenesis"/>
    <property type="evidence" value="ECO:0007669"/>
    <property type="project" value="UniProtKB-UniRule"/>
</dbReference>
<dbReference type="CDD" id="cd01898">
    <property type="entry name" value="Obg"/>
    <property type="match status" value="1"/>
</dbReference>
<dbReference type="FunFam" id="2.70.210.12:FF:000001">
    <property type="entry name" value="GTPase Obg"/>
    <property type="match status" value="1"/>
</dbReference>
<dbReference type="FunFam" id="3.40.50.300:FF:000185">
    <property type="entry name" value="GTPase Obg"/>
    <property type="match status" value="1"/>
</dbReference>
<dbReference type="Gene3D" id="2.70.210.12">
    <property type="entry name" value="GTP1/OBG domain"/>
    <property type="match status" value="1"/>
</dbReference>
<dbReference type="Gene3D" id="3.40.50.300">
    <property type="entry name" value="P-loop containing nucleotide triphosphate hydrolases"/>
    <property type="match status" value="1"/>
</dbReference>
<dbReference type="HAMAP" id="MF_01454">
    <property type="entry name" value="GTPase_Obg"/>
    <property type="match status" value="1"/>
</dbReference>
<dbReference type="InterPro" id="IPR031167">
    <property type="entry name" value="G_OBG"/>
</dbReference>
<dbReference type="InterPro" id="IPR006073">
    <property type="entry name" value="GTP-bd"/>
</dbReference>
<dbReference type="InterPro" id="IPR014100">
    <property type="entry name" value="GTP-bd_Obg/CgtA"/>
</dbReference>
<dbReference type="InterPro" id="IPR006074">
    <property type="entry name" value="GTP1-OBG_CS"/>
</dbReference>
<dbReference type="InterPro" id="IPR006169">
    <property type="entry name" value="GTP1_OBG_dom"/>
</dbReference>
<dbReference type="InterPro" id="IPR036726">
    <property type="entry name" value="GTP1_OBG_dom_sf"/>
</dbReference>
<dbReference type="InterPro" id="IPR045086">
    <property type="entry name" value="OBG_GTPase"/>
</dbReference>
<dbReference type="InterPro" id="IPR027417">
    <property type="entry name" value="P-loop_NTPase"/>
</dbReference>
<dbReference type="NCBIfam" id="TIGR02729">
    <property type="entry name" value="Obg_CgtA"/>
    <property type="match status" value="1"/>
</dbReference>
<dbReference type="NCBIfam" id="NF008955">
    <property type="entry name" value="PRK12297.1"/>
    <property type="match status" value="1"/>
</dbReference>
<dbReference type="NCBIfam" id="NF008956">
    <property type="entry name" value="PRK12299.1"/>
    <property type="match status" value="1"/>
</dbReference>
<dbReference type="PANTHER" id="PTHR11702">
    <property type="entry name" value="DEVELOPMENTALLY REGULATED GTP-BINDING PROTEIN-RELATED"/>
    <property type="match status" value="1"/>
</dbReference>
<dbReference type="PANTHER" id="PTHR11702:SF31">
    <property type="entry name" value="MITOCHONDRIAL RIBOSOME-ASSOCIATED GTPASE 2"/>
    <property type="match status" value="1"/>
</dbReference>
<dbReference type="Pfam" id="PF01018">
    <property type="entry name" value="GTP1_OBG"/>
    <property type="match status" value="1"/>
</dbReference>
<dbReference type="Pfam" id="PF01926">
    <property type="entry name" value="MMR_HSR1"/>
    <property type="match status" value="1"/>
</dbReference>
<dbReference type="PIRSF" id="PIRSF002401">
    <property type="entry name" value="GTP_bd_Obg/CgtA"/>
    <property type="match status" value="1"/>
</dbReference>
<dbReference type="PRINTS" id="PR00326">
    <property type="entry name" value="GTP1OBG"/>
</dbReference>
<dbReference type="SUPFAM" id="SSF82051">
    <property type="entry name" value="Obg GTP-binding protein N-terminal domain"/>
    <property type="match status" value="1"/>
</dbReference>
<dbReference type="SUPFAM" id="SSF52540">
    <property type="entry name" value="P-loop containing nucleoside triphosphate hydrolases"/>
    <property type="match status" value="1"/>
</dbReference>
<dbReference type="PROSITE" id="PS51710">
    <property type="entry name" value="G_OBG"/>
    <property type="match status" value="1"/>
</dbReference>
<dbReference type="PROSITE" id="PS00905">
    <property type="entry name" value="GTP1_OBG"/>
    <property type="match status" value="1"/>
</dbReference>
<dbReference type="PROSITE" id="PS51883">
    <property type="entry name" value="OBG"/>
    <property type="match status" value="1"/>
</dbReference>
<protein>
    <recommendedName>
        <fullName evidence="1">GTPase Obg</fullName>
        <ecNumber evidence="1">3.6.5.-</ecNumber>
    </recommendedName>
    <alternativeName>
        <fullName evidence="1">GTP-binding protein Obg</fullName>
    </alternativeName>
</protein>
<gene>
    <name evidence="1" type="primary">obg</name>
    <name type="ordered locus">PMI3407</name>
</gene>
<reference key="1">
    <citation type="journal article" date="2008" name="J. Bacteriol.">
        <title>Complete genome sequence of uropathogenic Proteus mirabilis, a master of both adherence and motility.</title>
        <authorList>
            <person name="Pearson M.M."/>
            <person name="Sebaihia M."/>
            <person name="Churcher C."/>
            <person name="Quail M.A."/>
            <person name="Seshasayee A.S."/>
            <person name="Luscombe N.M."/>
            <person name="Abdellah Z."/>
            <person name="Arrosmith C."/>
            <person name="Atkin B."/>
            <person name="Chillingworth T."/>
            <person name="Hauser H."/>
            <person name="Jagels K."/>
            <person name="Moule S."/>
            <person name="Mungall K."/>
            <person name="Norbertczak H."/>
            <person name="Rabbinowitsch E."/>
            <person name="Walker D."/>
            <person name="Whithead S."/>
            <person name="Thomson N.R."/>
            <person name="Rather P.N."/>
            <person name="Parkhill J."/>
            <person name="Mobley H.L.T."/>
        </authorList>
    </citation>
    <scope>NUCLEOTIDE SEQUENCE [LARGE SCALE GENOMIC DNA]</scope>
    <source>
        <strain>HI4320</strain>
    </source>
</reference>
<keyword id="KW-0963">Cytoplasm</keyword>
<keyword id="KW-0342">GTP-binding</keyword>
<keyword id="KW-0378">Hydrolase</keyword>
<keyword id="KW-0460">Magnesium</keyword>
<keyword id="KW-0479">Metal-binding</keyword>
<keyword id="KW-0547">Nucleotide-binding</keyword>
<keyword id="KW-1185">Reference proteome</keyword>
<organism>
    <name type="scientific">Proteus mirabilis (strain HI4320)</name>
    <dbReference type="NCBI Taxonomy" id="529507"/>
    <lineage>
        <taxon>Bacteria</taxon>
        <taxon>Pseudomonadati</taxon>
        <taxon>Pseudomonadota</taxon>
        <taxon>Gammaproteobacteria</taxon>
        <taxon>Enterobacterales</taxon>
        <taxon>Morganellaceae</taxon>
        <taxon>Proteus</taxon>
    </lineage>
</organism>